<proteinExistence type="inferred from homology"/>
<comment type="function">
    <text evidence="1 3">Virulence factor required for growth in low Mg(2+) medium and for intramacrophage survival. May be involved in regulating membrane potential by activating Na(+)/K(+)-ATPase (By similarity).</text>
</comment>
<comment type="subcellular location">
    <subcellularLocation>
        <location evidence="4">Cell inner membrane</location>
        <topology evidence="4">Multi-pass membrane protein</topology>
    </subcellularLocation>
</comment>
<comment type="similarity">
    <text evidence="4">Belongs to the MgtC/SapB family.</text>
</comment>
<sequence length="238" mass="25357">MVWKPLAHTAACLAGAFLLGGLIGFERQFRHRLAGLRTNTLVAVGAATFVVFSSLVSGDSSPTRVAAQIVSGIGFLGAGIIFKEGFNVRGLNTAATLWCSAAVGVLCGAGLISHAAVATVFIIAVNALLRPLVQVLEFQAMRRGAFQPTYAIDIICHGDAEAQVRALLLRDIGDHLHIHELESSNIEGTNRVEVSATVRADQRQDRLLEQIVGHLSLEPRITSARWRIEDDSGGLSGL</sequence>
<name>MGTC_BRUSU</name>
<dbReference type="EMBL" id="AE014292">
    <property type="protein sequence ID" value="AAN33252.1"/>
    <property type="molecule type" value="Genomic_DNA"/>
</dbReference>
<dbReference type="EMBL" id="CP002998">
    <property type="protein sequence ID" value="AEM19532.1"/>
    <property type="molecule type" value="Genomic_DNA"/>
</dbReference>
<dbReference type="RefSeq" id="WP_002966539.1">
    <property type="nucleotide sequence ID" value="NZ_KN046805.1"/>
</dbReference>
<dbReference type="SMR" id="Q8FXM5"/>
<dbReference type="KEGG" id="bms:BRA0040"/>
<dbReference type="KEGG" id="bsi:BS1330_II0040"/>
<dbReference type="PATRIC" id="fig|204722.21.peg.2334"/>
<dbReference type="HOGENOM" id="CLU_079292_0_0_5"/>
<dbReference type="PhylomeDB" id="Q8FXM5"/>
<dbReference type="Proteomes" id="UP000007104">
    <property type="component" value="Chromosome II"/>
</dbReference>
<dbReference type="GO" id="GO:0005886">
    <property type="term" value="C:plasma membrane"/>
    <property type="evidence" value="ECO:0007669"/>
    <property type="project" value="UniProtKB-SubCell"/>
</dbReference>
<dbReference type="Gene3D" id="3.30.70.260">
    <property type="match status" value="1"/>
</dbReference>
<dbReference type="InterPro" id="IPR048640">
    <property type="entry name" value="MgtC-like_C"/>
</dbReference>
<dbReference type="InterPro" id="IPR003416">
    <property type="entry name" value="MgtC/SapB/SrpB/YhiD_fam"/>
</dbReference>
<dbReference type="InterPro" id="IPR049177">
    <property type="entry name" value="MgtC_SapB_SrpB_YhiD_N"/>
</dbReference>
<dbReference type="PANTHER" id="PTHR33778">
    <property type="entry name" value="PROTEIN MGTC"/>
    <property type="match status" value="1"/>
</dbReference>
<dbReference type="PANTHER" id="PTHR33778:SF3">
    <property type="entry name" value="PROTEIN MGTC"/>
    <property type="match status" value="1"/>
</dbReference>
<dbReference type="Pfam" id="PF02308">
    <property type="entry name" value="MgtC"/>
    <property type="match status" value="1"/>
</dbReference>
<dbReference type="Pfam" id="PF21770">
    <property type="entry name" value="MgtC_SapB_C"/>
    <property type="match status" value="1"/>
</dbReference>
<dbReference type="PRINTS" id="PR01837">
    <property type="entry name" value="MGTCSAPBPROT"/>
</dbReference>
<keyword id="KW-0997">Cell inner membrane</keyword>
<keyword id="KW-1003">Cell membrane</keyword>
<keyword id="KW-0472">Membrane</keyword>
<keyword id="KW-0812">Transmembrane</keyword>
<keyword id="KW-1133">Transmembrane helix</keyword>
<keyword id="KW-0843">Virulence</keyword>
<organism>
    <name type="scientific">Brucella suis biovar 1 (strain 1330)</name>
    <dbReference type="NCBI Taxonomy" id="204722"/>
    <lineage>
        <taxon>Bacteria</taxon>
        <taxon>Pseudomonadati</taxon>
        <taxon>Pseudomonadota</taxon>
        <taxon>Alphaproteobacteria</taxon>
        <taxon>Hyphomicrobiales</taxon>
        <taxon>Brucellaceae</taxon>
        <taxon>Brucella/Ochrobactrum group</taxon>
        <taxon>Brucella</taxon>
    </lineage>
</organism>
<reference key="1">
    <citation type="journal article" date="2002" name="Proc. Natl. Acad. Sci. U.S.A.">
        <title>The Brucella suis genome reveals fundamental similarities between animal and plant pathogens and symbionts.</title>
        <authorList>
            <person name="Paulsen I.T."/>
            <person name="Seshadri R."/>
            <person name="Nelson K.E."/>
            <person name="Eisen J.A."/>
            <person name="Heidelberg J.F."/>
            <person name="Read T.D."/>
            <person name="Dodson R.J."/>
            <person name="Umayam L.A."/>
            <person name="Brinkac L.M."/>
            <person name="Beanan M.J."/>
            <person name="Daugherty S.C."/>
            <person name="DeBoy R.T."/>
            <person name="Durkin A.S."/>
            <person name="Kolonay J.F."/>
            <person name="Madupu R."/>
            <person name="Nelson W.C."/>
            <person name="Ayodeji B."/>
            <person name="Kraul M."/>
            <person name="Shetty J."/>
            <person name="Malek J.A."/>
            <person name="Van Aken S.E."/>
            <person name="Riedmuller S."/>
            <person name="Tettelin H."/>
            <person name="Gill S.R."/>
            <person name="White O."/>
            <person name="Salzberg S.L."/>
            <person name="Hoover D.L."/>
            <person name="Lindler L.E."/>
            <person name="Halling S.M."/>
            <person name="Boyle S.M."/>
            <person name="Fraser C.M."/>
        </authorList>
    </citation>
    <scope>NUCLEOTIDE SEQUENCE [LARGE SCALE GENOMIC DNA]</scope>
    <source>
        <strain>1330</strain>
    </source>
</reference>
<reference key="2">
    <citation type="journal article" date="2011" name="J. Bacteriol.">
        <title>Revised genome sequence of Brucella suis 1330.</title>
        <authorList>
            <person name="Tae H."/>
            <person name="Shallom S."/>
            <person name="Settlage R."/>
            <person name="Preston D."/>
            <person name="Adams L.G."/>
            <person name="Garner H.R."/>
        </authorList>
    </citation>
    <scope>NUCLEOTIDE SEQUENCE [LARGE SCALE GENOMIC DNA]</scope>
    <source>
        <strain>1330</strain>
    </source>
</reference>
<reference key="3">
    <citation type="journal article" date="2005" name="Infect. Immun.">
        <title>Requirement of MgtC for Brucella suis intramacrophage growth: a potential mechanism shared by Salmonella enterica and Mycobacterium tuberculosis for adaptation to a low-Mg2+ environment.</title>
        <authorList>
            <person name="Lavigne J.-P."/>
            <person name="O'Callaghan D."/>
            <person name="Blanc-Potard A.-B."/>
        </authorList>
    </citation>
    <scope>FUNCTION</scope>
    <source>
        <strain>1330</strain>
    </source>
</reference>
<evidence type="ECO:0000250" key="1"/>
<evidence type="ECO:0000255" key="2"/>
<evidence type="ECO:0000269" key="3">
    <source>
    </source>
</evidence>
<evidence type="ECO:0000305" key="4"/>
<gene>
    <name type="primary">mgtC</name>
    <name type="ordered locus">BRA0040</name>
    <name type="ordered locus">BS1330_II0040</name>
</gene>
<protein>
    <recommendedName>
        <fullName>Protein MgtC</fullName>
    </recommendedName>
</protein>
<accession>Q8FXM5</accession>
<accession>G0KEN8</accession>
<feature type="chain" id="PRO_0000250526" description="Protein MgtC">
    <location>
        <begin position="1"/>
        <end position="238"/>
    </location>
</feature>
<feature type="transmembrane region" description="Helical" evidence="2">
    <location>
        <begin position="5"/>
        <end position="25"/>
    </location>
</feature>
<feature type="transmembrane region" description="Helical" evidence="2">
    <location>
        <begin position="38"/>
        <end position="58"/>
    </location>
</feature>
<feature type="transmembrane region" description="Helical" evidence="2">
    <location>
        <begin position="66"/>
        <end position="86"/>
    </location>
</feature>
<feature type="transmembrane region" description="Helical" evidence="2">
    <location>
        <begin position="105"/>
        <end position="125"/>
    </location>
</feature>